<comment type="similarity">
    <text evidence="2">Belongs to the poxviruses Kelch family.</text>
</comment>
<proteinExistence type="inferred from homology"/>
<name>C2_CAMPM</name>
<sequence length="512" mass="59228">MESVIFSINGEIIQVNKEIITASPYNFFKRIQEHHINDEAIILNGINYHAFESLLDYMRWKKINITVNNVEMILVAAVIIDIPPVVDLCVKTMIHNINSTNCIRMFNFSKRYGIKKLYNASMLEIINNITAVTSDPEFGKLSKDELTTILSHENVNVNHEDVTAMILLKWIHKNPNDVDIINILHPKFMTNTMCNAISLLGLTISKSTKPVTRNGIKHNIVVIKNSDYISTITHYSPRTEYWTIVGNTDRQFYNANVLYNCLYIIGGMINNRHVYSVSRVDLKTKKWKTVTNMSSLKSEVSTCVNDGKLYVIGGLEFSISTGVAEYLKHGTSKWIRLPNLITPRYSGASVFVNDDIYVMGGVYTTYEKYVVLNDVECFTKNRWIKKSPMPRHHSIVYAIEYDGDIYAITGITHETRNYLYKYIVKEDKWIELYMYFNHVGKMFVCSCGDYILIIADAKYEYYPKSNTWILFDMSTRNIEYYDMFTKDETPKCNVTHKSLPSFLSNCEKQFLQ</sequence>
<evidence type="ECO:0000255" key="1">
    <source>
        <dbReference type="PROSITE-ProRule" id="PRU00037"/>
    </source>
</evidence>
<evidence type="ECO:0000305" key="2"/>
<protein>
    <recommendedName>
        <fullName>Kelch repeat protein C2</fullName>
    </recommendedName>
</protein>
<reference key="1">
    <citation type="journal article" date="2002" name="Virology">
        <title>The genome of camelpox virus.</title>
        <authorList>
            <person name="Afonso C.L."/>
            <person name="Tulman E.R."/>
            <person name="Lu Z."/>
            <person name="Zsak L."/>
            <person name="Sandybaev N.T."/>
            <person name="Kerembekova U.Z."/>
            <person name="Zaitsev V.L."/>
            <person name="Kutish G.F."/>
            <person name="Rock D.L."/>
        </authorList>
    </citation>
    <scope>NUCLEOTIDE SEQUENCE [LARGE SCALE GENOMIC DNA]</scope>
</reference>
<keyword id="KW-0880">Kelch repeat</keyword>
<keyword id="KW-0677">Repeat</keyword>
<dbReference type="EMBL" id="AF438165">
    <property type="protein sequence ID" value="AAL73731.1"/>
    <property type="molecule type" value="Genomic_DNA"/>
</dbReference>
<dbReference type="RefSeq" id="NP_570414.1">
    <property type="nucleotide sequence ID" value="NC_003391.1"/>
</dbReference>
<dbReference type="SMR" id="Q8V2Z3"/>
<dbReference type="KEGG" id="vg:932678"/>
<dbReference type="Proteomes" id="UP000152221">
    <property type="component" value="Genome"/>
</dbReference>
<dbReference type="Gene3D" id="1.25.40.420">
    <property type="match status" value="1"/>
</dbReference>
<dbReference type="Gene3D" id="2.120.10.80">
    <property type="entry name" value="Kelch-type beta propeller"/>
    <property type="match status" value="1"/>
</dbReference>
<dbReference type="Gene3D" id="3.30.710.10">
    <property type="entry name" value="Potassium Channel Kv1.1, Chain A"/>
    <property type="match status" value="1"/>
</dbReference>
<dbReference type="InterPro" id="IPR011705">
    <property type="entry name" value="BACK"/>
</dbReference>
<dbReference type="InterPro" id="IPR000210">
    <property type="entry name" value="BTB/POZ_dom"/>
</dbReference>
<dbReference type="InterPro" id="IPR015915">
    <property type="entry name" value="Kelch-typ_b-propeller"/>
</dbReference>
<dbReference type="InterPro" id="IPR006652">
    <property type="entry name" value="Kelch_1"/>
</dbReference>
<dbReference type="InterPro" id="IPR011333">
    <property type="entry name" value="SKP1/BTB/POZ_sf"/>
</dbReference>
<dbReference type="PANTHER" id="PTHR24412">
    <property type="entry name" value="KELCH PROTEIN"/>
    <property type="match status" value="1"/>
</dbReference>
<dbReference type="PANTHER" id="PTHR24412:SF480">
    <property type="entry name" value="KELCH-LIKE PROTEIN 8"/>
    <property type="match status" value="1"/>
</dbReference>
<dbReference type="Pfam" id="PF07707">
    <property type="entry name" value="BACK"/>
    <property type="match status" value="1"/>
</dbReference>
<dbReference type="Pfam" id="PF00651">
    <property type="entry name" value="BTB"/>
    <property type="match status" value="1"/>
</dbReference>
<dbReference type="Pfam" id="PF01344">
    <property type="entry name" value="Kelch_1"/>
    <property type="match status" value="3"/>
</dbReference>
<dbReference type="SMART" id="SM00875">
    <property type="entry name" value="BACK"/>
    <property type="match status" value="1"/>
</dbReference>
<dbReference type="SMART" id="SM00225">
    <property type="entry name" value="BTB"/>
    <property type="match status" value="1"/>
</dbReference>
<dbReference type="SMART" id="SM00612">
    <property type="entry name" value="Kelch"/>
    <property type="match status" value="3"/>
</dbReference>
<dbReference type="SUPFAM" id="SSF117281">
    <property type="entry name" value="Kelch motif"/>
    <property type="match status" value="1"/>
</dbReference>
<dbReference type="SUPFAM" id="SSF54695">
    <property type="entry name" value="POZ domain"/>
    <property type="match status" value="1"/>
</dbReference>
<dbReference type="PROSITE" id="PS50097">
    <property type="entry name" value="BTB"/>
    <property type="match status" value="1"/>
</dbReference>
<accession>Q8V2Z3</accession>
<feature type="chain" id="PRO_0000119160" description="Kelch repeat protein C2">
    <location>
        <begin position="1"/>
        <end position="512"/>
    </location>
</feature>
<feature type="domain" description="BTB" evidence="1">
    <location>
        <begin position="2"/>
        <end position="67"/>
    </location>
</feature>
<feature type="domain" description="BACK">
    <location>
        <begin position="102"/>
        <end position="176"/>
    </location>
</feature>
<feature type="repeat" description="Kelch 1">
    <location>
        <begin position="216"/>
        <end position="261"/>
    </location>
</feature>
<feature type="repeat" description="Kelch 2">
    <location>
        <begin position="262"/>
        <end position="307"/>
    </location>
</feature>
<feature type="repeat" description="Kelch 3">
    <location>
        <begin position="309"/>
        <end position="354"/>
    </location>
</feature>
<feature type="repeat" description="Kelch 4">
    <location>
        <begin position="356"/>
        <end position="403"/>
    </location>
</feature>
<feature type="repeat" description="Kelch 5">
    <location>
        <begin position="405"/>
        <end position="449"/>
    </location>
</feature>
<feature type="repeat" description="Kelch 6">
    <location>
        <begin position="452"/>
        <end position="498"/>
    </location>
</feature>
<gene>
    <name type="ordered locus">CMLV024</name>
</gene>
<organismHost>
    <name type="scientific">Camelus</name>
    <dbReference type="NCBI Taxonomy" id="9836"/>
</organismHost>
<organism>
    <name type="scientific">Camelpox virus (strain M-96)</name>
    <dbReference type="NCBI Taxonomy" id="203173"/>
    <lineage>
        <taxon>Viruses</taxon>
        <taxon>Varidnaviria</taxon>
        <taxon>Bamfordvirae</taxon>
        <taxon>Nucleocytoviricota</taxon>
        <taxon>Pokkesviricetes</taxon>
        <taxon>Chitovirales</taxon>
        <taxon>Poxviridae</taxon>
        <taxon>Chordopoxvirinae</taxon>
        <taxon>Orthopoxvirus</taxon>
        <taxon>Camelpox virus</taxon>
    </lineage>
</organism>